<sequence>MERRMKAGYLDQQVPYTFSSKSPGNGSLREALIGPLGKLMDPGSLPPLDSEDLFQDLSHFQETWLAEAQVPDSDEQFVPDFHSENLAFHSPTTRIKKEPQSPRTDPALSCSRKPPLPYHHGEQCLYSSAYDPPRQIAIKSPAPGALGQSPLQPFPRAEQRNFLRSSGTSQPHPGHGYLGEHSSVFQQPLDICHSFTSQGGGREPLPAPYQHQLSEPCPPYPQQSFKQEYHDPLYEQAGQPAVDQGGVNGHRYPGAGVVIKQEQTDFAYDSDVTGCASMYLHTEGFSGPSPGDGAMGYGYEKPLRPFPDDVCVVPEKFEGDIKQEGVGAFREGPPYQRRGALQLWQFLVALLDDPTNAHFIAWTGRGMEFKLIEPEEVARLWGIQKNRPAMNYDKLSRSLRYYYEKGIMQKVAGERYVYKFVCEPEALFSLAFPDNQRPALKAEFDRPVSEEDTVPLSHLDESPAYLPELAGPAQPFGPKGGYSY</sequence>
<comment type="function">
    <text evidence="5 6">Transcriptional activator (PubMed:19307308, PubMed:31552090). May play a role in keratinocyte differentiation (PubMed:31552090).</text>
</comment>
<comment type="function">
    <text evidence="7">(Microbial infection) Binds to the enhancer of the adenovirus E1A gene and acts as a transcriptional activator; the core-binding sequence is 5'-[AC]GGA[AT]GT-3'.</text>
</comment>
<comment type="interaction">
    <interactant intactId="EBI-6447147">
        <id>P43268</id>
    </interactant>
    <interactant intactId="EBI-2007911">
        <id>Q16236</id>
        <label>NFE2L2</label>
    </interactant>
    <organismsDiffer>false</organismsDiffer>
    <experiments>6</experiments>
</comment>
<comment type="interaction">
    <interactant intactId="EBI-6447147">
        <id>P43268</id>
    </interactant>
    <interactant intactId="EBI-9675698">
        <id>P14079</id>
        <label>tax</label>
    </interactant>
    <organismsDiffer>true</organismsDiffer>
    <experiments>3</experiments>
</comment>
<comment type="interaction">
    <interactant intactId="EBI-12130722">
        <id>P43268-3</id>
    </interactant>
    <interactant intactId="EBI-16439278">
        <id>Q6FHY5</id>
        <label>MEOX2</label>
    </interactant>
    <organismsDiffer>false</organismsDiffer>
    <experiments>3</experiments>
</comment>
<comment type="interaction">
    <interactant intactId="EBI-12130722">
        <id>P43268-3</id>
    </interactant>
    <interactant intactId="EBI-347263">
        <id>Q13485</id>
        <label>SMAD4</label>
    </interactant>
    <organismsDiffer>false</organismsDiffer>
    <experiments>3</experiments>
</comment>
<comment type="subcellular location">
    <subcellularLocation>
        <location evidence="2">Nucleus</location>
    </subcellularLocation>
</comment>
<comment type="alternative products">
    <event type="alternative splicing"/>
    <isoform>
        <id>P43268-1</id>
        <name>1</name>
        <sequence type="displayed"/>
    </isoform>
    <isoform>
        <id>P43268-2</id>
        <name>2</name>
        <sequence type="described" ref="VSP_046036"/>
    </isoform>
    <isoform>
        <id>P43268-3</id>
        <name>3</name>
        <sequence type="described" ref="VSP_055314"/>
    </isoform>
</comment>
<comment type="tissue specificity">
    <text evidence="6">Expressed in keratinocytes.</text>
</comment>
<comment type="PTM">
    <text evidence="5">Sumoylated; enhanced upon ERK/MAP kinase pathway activation, it positively regulates the transcriptional activator capacity. Sumoylation at Lys-96 probably requires phosphorylation at Ser-101. Transiently polysumoylated and desumoylated by SENP1. Sumoylation is a prerequisite to polyubiquitination which in turn increases proteasomal-mediated degradation. Probably polyubiquitinated by RNF4 and deubiquitinated by USP2.</text>
</comment>
<comment type="similarity">
    <text evidence="10">Belongs to the ETS family.</text>
</comment>
<comment type="sequence caution" evidence="10">
    <conflict type="erroneous initiation">
        <sequence resource="EMBL-CDS" id="AAA95991"/>
    </conflict>
</comment>
<comment type="online information" name="Atlas of Genetics and Cytogenetics in Oncology and Haematology">
    <link uri="https://atlasgeneticsoncology.org/gene/133/ETV4"/>
</comment>
<protein>
    <recommendedName>
        <fullName>ETS translocation variant 4</fullName>
    </recommendedName>
    <alternativeName>
        <fullName>Adenovirus E1A enhancer-binding protein</fullName>
    </alternativeName>
    <alternativeName>
        <fullName>E1A-F</fullName>
    </alternativeName>
    <alternativeName>
        <fullName>Polyomavirus enhancer activator 3 homolog</fullName>
        <shortName>Protein PEA3</shortName>
    </alternativeName>
</protein>
<organism>
    <name type="scientific">Homo sapiens</name>
    <name type="common">Human</name>
    <dbReference type="NCBI Taxonomy" id="9606"/>
    <lineage>
        <taxon>Eukaryota</taxon>
        <taxon>Metazoa</taxon>
        <taxon>Chordata</taxon>
        <taxon>Craniata</taxon>
        <taxon>Vertebrata</taxon>
        <taxon>Euteleostomi</taxon>
        <taxon>Mammalia</taxon>
        <taxon>Eutheria</taxon>
        <taxon>Euarchontoglires</taxon>
        <taxon>Primates</taxon>
        <taxon>Haplorrhini</taxon>
        <taxon>Catarrhini</taxon>
        <taxon>Hominidae</taxon>
        <taxon>Homo</taxon>
    </lineage>
</organism>
<reference key="1">
    <citation type="journal article" date="1995" name="Genomics">
        <title>22 genes from chromosome 17q21: cloning, sequencing, and characterization of mutations in breast cancer families and tumors.</title>
        <authorList>
            <person name="Friedman L.S."/>
            <person name="Ostermeyer E.A."/>
            <person name="Lynch E.D."/>
            <person name="Szabo C.I."/>
            <person name="Meza J.E."/>
            <person name="Anderson L.A."/>
            <person name="Dowd P."/>
            <person name="Lee M.K."/>
            <person name="Rowell S.E."/>
            <person name="Ellison J."/>
            <person name="Boyd J."/>
            <person name="King M.-C."/>
        </authorList>
    </citation>
    <scope>NUCLEOTIDE SEQUENCE [MRNA] (ISOFORM 1)</scope>
</reference>
<reference key="2">
    <citation type="journal article" date="1999" name="Gene">
        <title>Genomic organization of the human e1af gene, a member of Ets transcription factors.</title>
        <authorList>
            <person name="Coutte L."/>
            <person name="Monte D."/>
            <person name="Baert J.-L."/>
            <person name="de Launoit Y."/>
        </authorList>
    </citation>
    <scope>NUCLEOTIDE SEQUENCE [GENOMIC DNA]</scope>
</reference>
<reference key="3">
    <citation type="journal article" date="2004" name="Nat. Genet.">
        <title>Complete sequencing and characterization of 21,243 full-length human cDNAs.</title>
        <authorList>
            <person name="Ota T."/>
            <person name="Suzuki Y."/>
            <person name="Nishikawa T."/>
            <person name="Otsuki T."/>
            <person name="Sugiyama T."/>
            <person name="Irie R."/>
            <person name="Wakamatsu A."/>
            <person name="Hayashi K."/>
            <person name="Sato H."/>
            <person name="Nagai K."/>
            <person name="Kimura K."/>
            <person name="Makita H."/>
            <person name="Sekine M."/>
            <person name="Obayashi M."/>
            <person name="Nishi T."/>
            <person name="Shibahara T."/>
            <person name="Tanaka T."/>
            <person name="Ishii S."/>
            <person name="Yamamoto J."/>
            <person name="Saito K."/>
            <person name="Kawai Y."/>
            <person name="Isono Y."/>
            <person name="Nakamura Y."/>
            <person name="Nagahari K."/>
            <person name="Murakami K."/>
            <person name="Yasuda T."/>
            <person name="Iwayanagi T."/>
            <person name="Wagatsuma M."/>
            <person name="Shiratori A."/>
            <person name="Sudo H."/>
            <person name="Hosoiri T."/>
            <person name="Kaku Y."/>
            <person name="Kodaira H."/>
            <person name="Kondo H."/>
            <person name="Sugawara M."/>
            <person name="Takahashi M."/>
            <person name="Kanda K."/>
            <person name="Yokoi T."/>
            <person name="Furuya T."/>
            <person name="Kikkawa E."/>
            <person name="Omura Y."/>
            <person name="Abe K."/>
            <person name="Kamihara K."/>
            <person name="Katsuta N."/>
            <person name="Sato K."/>
            <person name="Tanikawa M."/>
            <person name="Yamazaki M."/>
            <person name="Ninomiya K."/>
            <person name="Ishibashi T."/>
            <person name="Yamashita H."/>
            <person name="Murakawa K."/>
            <person name="Fujimori K."/>
            <person name="Tanai H."/>
            <person name="Kimata M."/>
            <person name="Watanabe M."/>
            <person name="Hiraoka S."/>
            <person name="Chiba Y."/>
            <person name="Ishida S."/>
            <person name="Ono Y."/>
            <person name="Takiguchi S."/>
            <person name="Watanabe S."/>
            <person name="Yosida M."/>
            <person name="Hotuta T."/>
            <person name="Kusano J."/>
            <person name="Kanehori K."/>
            <person name="Takahashi-Fujii A."/>
            <person name="Hara H."/>
            <person name="Tanase T.-O."/>
            <person name="Nomura Y."/>
            <person name="Togiya S."/>
            <person name="Komai F."/>
            <person name="Hara R."/>
            <person name="Takeuchi K."/>
            <person name="Arita M."/>
            <person name="Imose N."/>
            <person name="Musashino K."/>
            <person name="Yuuki H."/>
            <person name="Oshima A."/>
            <person name="Sasaki N."/>
            <person name="Aotsuka S."/>
            <person name="Yoshikawa Y."/>
            <person name="Matsunawa H."/>
            <person name="Ichihara T."/>
            <person name="Shiohata N."/>
            <person name="Sano S."/>
            <person name="Moriya S."/>
            <person name="Momiyama H."/>
            <person name="Satoh N."/>
            <person name="Takami S."/>
            <person name="Terashima Y."/>
            <person name="Suzuki O."/>
            <person name="Nakagawa S."/>
            <person name="Senoh A."/>
            <person name="Mizoguchi H."/>
            <person name="Goto Y."/>
            <person name="Shimizu F."/>
            <person name="Wakebe H."/>
            <person name="Hishigaki H."/>
            <person name="Watanabe T."/>
            <person name="Sugiyama A."/>
            <person name="Takemoto M."/>
            <person name="Kawakami B."/>
            <person name="Yamazaki M."/>
            <person name="Watanabe K."/>
            <person name="Kumagai A."/>
            <person name="Itakura S."/>
            <person name="Fukuzumi Y."/>
            <person name="Fujimori Y."/>
            <person name="Komiyama M."/>
            <person name="Tashiro H."/>
            <person name="Tanigami A."/>
            <person name="Fujiwara T."/>
            <person name="Ono T."/>
            <person name="Yamada K."/>
            <person name="Fujii Y."/>
            <person name="Ozaki K."/>
            <person name="Hirao M."/>
            <person name="Ohmori Y."/>
            <person name="Kawabata A."/>
            <person name="Hikiji T."/>
            <person name="Kobatake N."/>
            <person name="Inagaki H."/>
            <person name="Ikema Y."/>
            <person name="Okamoto S."/>
            <person name="Okitani R."/>
            <person name="Kawakami T."/>
            <person name="Noguchi S."/>
            <person name="Itoh T."/>
            <person name="Shigeta K."/>
            <person name="Senba T."/>
            <person name="Matsumura K."/>
            <person name="Nakajima Y."/>
            <person name="Mizuno T."/>
            <person name="Morinaga M."/>
            <person name="Sasaki M."/>
            <person name="Togashi T."/>
            <person name="Oyama M."/>
            <person name="Hata H."/>
            <person name="Watanabe M."/>
            <person name="Komatsu T."/>
            <person name="Mizushima-Sugano J."/>
            <person name="Satoh T."/>
            <person name="Shirai Y."/>
            <person name="Takahashi Y."/>
            <person name="Nakagawa K."/>
            <person name="Okumura K."/>
            <person name="Nagase T."/>
            <person name="Nomura N."/>
            <person name="Kikuchi H."/>
            <person name="Masuho Y."/>
            <person name="Yamashita R."/>
            <person name="Nakai K."/>
            <person name="Yada T."/>
            <person name="Nakamura Y."/>
            <person name="Ohara O."/>
            <person name="Isogai T."/>
            <person name="Sugano S."/>
        </authorList>
    </citation>
    <scope>NUCLEOTIDE SEQUENCE [LARGE SCALE MRNA] (ISOFORMS 1 AND 2)</scope>
    <scope>VARIANT ILE-195</scope>
    <source>
        <tissue>Amygdala</tissue>
    </source>
</reference>
<reference key="4">
    <citation type="journal article" date="2006" name="Nature">
        <title>DNA sequence of human chromosome 17 and analysis of rearrangement in the human lineage.</title>
        <authorList>
            <person name="Zody M.C."/>
            <person name="Garber M."/>
            <person name="Adams D.J."/>
            <person name="Sharpe T."/>
            <person name="Harrow J."/>
            <person name="Lupski J.R."/>
            <person name="Nicholson C."/>
            <person name="Searle S.M."/>
            <person name="Wilming L."/>
            <person name="Young S.K."/>
            <person name="Abouelleil A."/>
            <person name="Allen N.R."/>
            <person name="Bi W."/>
            <person name="Bloom T."/>
            <person name="Borowsky M.L."/>
            <person name="Bugalter B.E."/>
            <person name="Butler J."/>
            <person name="Chang J.L."/>
            <person name="Chen C.-K."/>
            <person name="Cook A."/>
            <person name="Corum B."/>
            <person name="Cuomo C.A."/>
            <person name="de Jong P.J."/>
            <person name="DeCaprio D."/>
            <person name="Dewar K."/>
            <person name="FitzGerald M."/>
            <person name="Gilbert J."/>
            <person name="Gibson R."/>
            <person name="Gnerre S."/>
            <person name="Goldstein S."/>
            <person name="Grafham D.V."/>
            <person name="Grocock R."/>
            <person name="Hafez N."/>
            <person name="Hagopian D.S."/>
            <person name="Hart E."/>
            <person name="Norman C.H."/>
            <person name="Humphray S."/>
            <person name="Jaffe D.B."/>
            <person name="Jones M."/>
            <person name="Kamal M."/>
            <person name="Khodiyar V.K."/>
            <person name="LaButti K."/>
            <person name="Laird G."/>
            <person name="Lehoczky J."/>
            <person name="Liu X."/>
            <person name="Lokyitsang T."/>
            <person name="Loveland J."/>
            <person name="Lui A."/>
            <person name="Macdonald P."/>
            <person name="Major J.E."/>
            <person name="Matthews L."/>
            <person name="Mauceli E."/>
            <person name="McCarroll S.A."/>
            <person name="Mihalev A.H."/>
            <person name="Mudge J."/>
            <person name="Nguyen C."/>
            <person name="Nicol R."/>
            <person name="O'Leary S.B."/>
            <person name="Osoegawa K."/>
            <person name="Schwartz D.C."/>
            <person name="Shaw-Smith C."/>
            <person name="Stankiewicz P."/>
            <person name="Steward C."/>
            <person name="Swarbreck D."/>
            <person name="Venkataraman V."/>
            <person name="Whittaker C.A."/>
            <person name="Yang X."/>
            <person name="Zimmer A.R."/>
            <person name="Bradley A."/>
            <person name="Hubbard T."/>
            <person name="Birren B.W."/>
            <person name="Rogers J."/>
            <person name="Lander E.S."/>
            <person name="Nusbaum C."/>
        </authorList>
    </citation>
    <scope>NUCLEOTIDE SEQUENCE [LARGE SCALE GENOMIC DNA]</scope>
</reference>
<reference key="5">
    <citation type="journal article" date="2004" name="Genome Res.">
        <title>The status, quality, and expansion of the NIH full-length cDNA project: the Mammalian Gene Collection (MGC).</title>
        <authorList>
            <consortium name="The MGC Project Team"/>
        </authorList>
    </citation>
    <scope>NUCLEOTIDE SEQUENCE [LARGE SCALE MRNA] (ISOFORMS 1 AND 3)</scope>
    <source>
        <tissue>Colon</tissue>
    </source>
</reference>
<reference key="6">
    <citation type="journal article" date="1993" name="Nucleic Acids Res.">
        <title>Isolation of a cDNA encoding the adenovirus E1A enhancer binding protein: a new human member of the ets oncogene family.</title>
        <authorList>
            <person name="Higashino F."/>
            <person name="Yoshida K."/>
            <person name="Fujinaga K."/>
            <person name="Kamio K."/>
            <person name="Fujinaga K."/>
        </authorList>
    </citation>
    <scope>NUCLEOTIDE SEQUENCE [MRNA] OF 23-484 (ISOFORM 1)</scope>
    <scope>FUNCTION</scope>
</reference>
<reference key="7">
    <citation type="journal article" date="2008" name="Proc. Natl. Acad. Sci. U.S.A.">
        <title>A quantitative atlas of mitotic phosphorylation.</title>
        <authorList>
            <person name="Dephoure N."/>
            <person name="Zhou C."/>
            <person name="Villen J."/>
            <person name="Beausoleil S.A."/>
            <person name="Bakalarski C.E."/>
            <person name="Elledge S.J."/>
            <person name="Gygi S.P."/>
        </authorList>
    </citation>
    <scope>IDENTIFICATION BY MASS SPECTROMETRY [LARGE SCALE ANALYSIS]</scope>
    <source>
        <tissue>Cervix carcinoma</tissue>
    </source>
</reference>
<reference key="8">
    <citation type="journal article" date="2009" name="Mol. Cell. Biol.">
        <title>Extracellular signal-regulated kinase mitogen-activated protein kinase signaling initiates a dynamic interplay between sumoylation and ubiquitination to regulate the activity of the transcriptional activator PEA3.</title>
        <authorList>
            <person name="Guo B."/>
            <person name="Sharrocks A.D."/>
        </authorList>
    </citation>
    <scope>FUNCTION</scope>
    <scope>SUMOYLATION AT LYS-96; LYS-226 AND LYS-260</scope>
    <scope>DESUMOYLATION BY SENP1</scope>
    <scope>PHOSPHORYLATION AT SER-101</scope>
    <scope>UBIQUITINATION BY RNF4</scope>
    <scope>DEUBIQUITINATION BY UPS2</scope>
    <scope>MUTAGENESIS OF LYS-96; GLU-98; SER-101; PRO-102; LYS-226; GLU-228; LYS-260; GLU-262; GLU-324 AND GLU-443</scope>
</reference>
<reference key="9">
    <citation type="journal article" date="2013" name="J. Proteome Res.">
        <title>Toward a comprehensive characterization of a human cancer cell phosphoproteome.</title>
        <authorList>
            <person name="Zhou H."/>
            <person name="Di Palma S."/>
            <person name="Preisinger C."/>
            <person name="Peng M."/>
            <person name="Polat A.N."/>
            <person name="Heck A.J."/>
            <person name="Mohammed S."/>
        </authorList>
    </citation>
    <scope>PHOSPHORYLATION [LARGE SCALE ANALYSIS] AT SER-140 AND SER-149</scope>
    <scope>IDENTIFICATION BY MASS SPECTROMETRY [LARGE SCALE ANALYSIS]</scope>
    <source>
        <tissue>Erythroleukemia</tissue>
    </source>
</reference>
<reference key="10">
    <citation type="journal article" date="2015" name="Mol. Cell. Proteomics">
        <title>System-wide analysis of SUMOylation dynamics in response to replication stress reveals novel small ubiquitin-like modified target proteins and acceptor lysines relevant for genome stability.</title>
        <authorList>
            <person name="Xiao Z."/>
            <person name="Chang J.G."/>
            <person name="Hendriks I.A."/>
            <person name="Sigurdsson J.O."/>
            <person name="Olsen J.V."/>
            <person name="Vertegaal A.C."/>
        </authorList>
    </citation>
    <scope>SUMOYLATION [LARGE SCALE ANALYSIS] AT LYS-322</scope>
    <scope>IDENTIFICATION BY MASS SPECTROMETRY [LARGE SCALE ANALYSIS]</scope>
</reference>
<reference key="11">
    <citation type="journal article" date="2017" name="Nat. Struct. Mol. Biol.">
        <title>Site-specific mapping of the human SUMO proteome reveals co-modification with phosphorylation.</title>
        <authorList>
            <person name="Hendriks I.A."/>
            <person name="Lyon D."/>
            <person name="Young C."/>
            <person name="Jensen L.J."/>
            <person name="Vertegaal A.C."/>
            <person name="Nielsen M.L."/>
        </authorList>
    </citation>
    <scope>SUMOYLATION [LARGE SCALE ANALYSIS] AT LYS-6 AND LYS-139</scope>
    <scope>IDENTIFICATION BY MASS SPECTROMETRY [LARGE SCALE ANALYSIS]</scope>
</reference>
<reference key="12">
    <citation type="journal article" date="2019" name="Front. Genet.">
        <title>Single-Cell Transcriptomics Reveals Spatial and Temporal Turnover of Keratinocyte Differentiation Regulators.</title>
        <authorList>
            <person name="Finnegan A."/>
            <person name="Cho R.J."/>
            <person name="Luu A."/>
            <person name="Harirchian P."/>
            <person name="Lee J."/>
            <person name="Cheng J.B."/>
            <person name="Song J.S."/>
        </authorList>
    </citation>
    <scope>FUNCTION</scope>
    <scope>TISSUE SPECIFICITY</scope>
</reference>
<name>ETV4_HUMAN</name>
<evidence type="ECO:0000250" key="1">
    <source>
        <dbReference type="UniProtKB" id="P50549"/>
    </source>
</evidence>
<evidence type="ECO:0000255" key="2">
    <source>
        <dbReference type="PROSITE-ProRule" id="PRU00237"/>
    </source>
</evidence>
<evidence type="ECO:0000256" key="3">
    <source>
        <dbReference type="SAM" id="MobiDB-lite"/>
    </source>
</evidence>
<evidence type="ECO:0000269" key="4">
    <source>
    </source>
</evidence>
<evidence type="ECO:0000269" key="5">
    <source>
    </source>
</evidence>
<evidence type="ECO:0000269" key="6">
    <source>
    </source>
</evidence>
<evidence type="ECO:0000269" key="7">
    <source>
    </source>
</evidence>
<evidence type="ECO:0000303" key="8">
    <source>
    </source>
</evidence>
<evidence type="ECO:0000303" key="9">
    <source>
    </source>
</evidence>
<evidence type="ECO:0000305" key="10"/>
<evidence type="ECO:0007744" key="11">
    <source>
    </source>
</evidence>
<evidence type="ECO:0007744" key="12">
    <source>
    </source>
</evidence>
<evidence type="ECO:0007744" key="13">
    <source>
    </source>
</evidence>
<evidence type="ECO:0007829" key="14">
    <source>
        <dbReference type="PDB" id="4CO8"/>
    </source>
</evidence>
<proteinExistence type="evidence at protein level"/>
<dbReference type="EMBL" id="U18018">
    <property type="protein sequence ID" value="AAA95991.1"/>
    <property type="status" value="ALT_INIT"/>
    <property type="molecule type" value="mRNA"/>
</dbReference>
<dbReference type="EMBL" id="AF095890">
    <property type="protein sequence ID" value="AAD09186.1"/>
    <property type="molecule type" value="Genomic_DNA"/>
</dbReference>
<dbReference type="EMBL" id="AF095887">
    <property type="protein sequence ID" value="AAD09186.1"/>
    <property type="status" value="JOINED"/>
    <property type="molecule type" value="Genomic_DNA"/>
</dbReference>
<dbReference type="EMBL" id="AF095888">
    <property type="protein sequence ID" value="AAD09186.1"/>
    <property type="status" value="JOINED"/>
    <property type="molecule type" value="Genomic_DNA"/>
</dbReference>
<dbReference type="EMBL" id="AF095889">
    <property type="protein sequence ID" value="AAD09186.1"/>
    <property type="status" value="JOINED"/>
    <property type="molecule type" value="Genomic_DNA"/>
</dbReference>
<dbReference type="EMBL" id="AK290429">
    <property type="protein sequence ID" value="BAF83118.1"/>
    <property type="molecule type" value="mRNA"/>
</dbReference>
<dbReference type="EMBL" id="AK299019">
    <property type="protein sequence ID" value="BAH12929.1"/>
    <property type="molecule type" value="mRNA"/>
</dbReference>
<dbReference type="EMBL" id="AK315961">
    <property type="protein sequence ID" value="BAH14332.1"/>
    <property type="molecule type" value="mRNA"/>
</dbReference>
<dbReference type="EMBL" id="AC068675">
    <property type="status" value="NOT_ANNOTATED_CDS"/>
    <property type="molecule type" value="Genomic_DNA"/>
</dbReference>
<dbReference type="EMBL" id="BC007242">
    <property type="status" value="NOT_ANNOTATED_CDS"/>
    <property type="molecule type" value="mRNA"/>
</dbReference>
<dbReference type="EMBL" id="BC016623">
    <property type="protein sequence ID" value="AAH16623.1"/>
    <property type="molecule type" value="mRNA"/>
</dbReference>
<dbReference type="EMBL" id="D12765">
    <property type="protein sequence ID" value="BAA02234.1"/>
    <property type="molecule type" value="mRNA"/>
</dbReference>
<dbReference type="CCDS" id="CCDS11465.1">
    <molecule id="P43268-1"/>
</dbReference>
<dbReference type="CCDS" id="CCDS58553.1">
    <molecule id="P43268-2"/>
</dbReference>
<dbReference type="CCDS" id="CCDS59292.1">
    <molecule id="P43268-3"/>
</dbReference>
<dbReference type="PIR" id="S35534">
    <property type="entry name" value="S35534"/>
</dbReference>
<dbReference type="RefSeq" id="NP_001073143.1">
    <molecule id="P43268-1"/>
    <property type="nucleotide sequence ID" value="NM_001079675.5"/>
</dbReference>
<dbReference type="RefSeq" id="NP_001248366.1">
    <molecule id="P43268-2"/>
    <property type="nucleotide sequence ID" value="NM_001261437.3"/>
</dbReference>
<dbReference type="RefSeq" id="NP_001248367.1">
    <molecule id="P43268-2"/>
    <property type="nucleotide sequence ID" value="NM_001261438.3"/>
</dbReference>
<dbReference type="RefSeq" id="NP_001248368.1">
    <molecule id="P43268-3"/>
    <property type="nucleotide sequence ID" value="NM_001261439.3"/>
</dbReference>
<dbReference type="RefSeq" id="NP_001356295.1">
    <molecule id="P43268-1"/>
    <property type="nucleotide sequence ID" value="NM_001369366.2"/>
</dbReference>
<dbReference type="RefSeq" id="NP_001977.1">
    <molecule id="P43268-1"/>
    <property type="nucleotide sequence ID" value="NM_001986.4"/>
</dbReference>
<dbReference type="RefSeq" id="XP_047291549.1">
    <molecule id="P43268-3"/>
    <property type="nucleotide sequence ID" value="XM_047435593.1"/>
</dbReference>
<dbReference type="PDB" id="4CO8">
    <property type="method" value="X-ray"/>
    <property type="resolution" value="1.05 A"/>
    <property type="chains" value="A=338-470"/>
</dbReference>
<dbReference type="PDB" id="4UUV">
    <property type="method" value="X-ray"/>
    <property type="resolution" value="2.80 A"/>
    <property type="chains" value="A/D/G/J/M/P/S/V=338-435"/>
</dbReference>
<dbReference type="PDB" id="5ILU">
    <property type="method" value="X-ray"/>
    <property type="resolution" value="1.10 A"/>
    <property type="chains" value="A=340-436"/>
</dbReference>
<dbReference type="PDBsum" id="4CO8"/>
<dbReference type="PDBsum" id="4UUV"/>
<dbReference type="PDBsum" id="5ILU"/>
<dbReference type="SMR" id="P43268"/>
<dbReference type="BioGRID" id="108419">
    <property type="interactions" value="67"/>
</dbReference>
<dbReference type="DIP" id="DIP-748N"/>
<dbReference type="FunCoup" id="P43268">
    <property type="interactions" value="1256"/>
</dbReference>
<dbReference type="IntAct" id="P43268">
    <property type="interactions" value="55"/>
</dbReference>
<dbReference type="MINT" id="P43268"/>
<dbReference type="STRING" id="9606.ENSP00000321835"/>
<dbReference type="iPTMnet" id="P43268"/>
<dbReference type="PhosphoSitePlus" id="P43268"/>
<dbReference type="BioMuta" id="ETV4"/>
<dbReference type="DMDM" id="62512145"/>
<dbReference type="jPOST" id="P43268"/>
<dbReference type="MassIVE" id="P43268"/>
<dbReference type="PaxDb" id="9606-ENSP00000321835"/>
<dbReference type="PeptideAtlas" id="P43268"/>
<dbReference type="ProteomicsDB" id="55606">
    <molecule id="P43268-1"/>
</dbReference>
<dbReference type="ProteomicsDB" id="6696"/>
<dbReference type="Antibodypedia" id="890">
    <property type="antibodies" value="322 antibodies from 37 providers"/>
</dbReference>
<dbReference type="DNASU" id="2118"/>
<dbReference type="Ensembl" id="ENST00000319349.10">
    <molecule id="P43268-1"/>
    <property type="protein sequence ID" value="ENSP00000321835.4"/>
    <property type="gene ID" value="ENSG00000175832.13"/>
</dbReference>
<dbReference type="Ensembl" id="ENST00000393664.6">
    <molecule id="P43268-1"/>
    <property type="protein sequence ID" value="ENSP00000377273.1"/>
    <property type="gene ID" value="ENSG00000175832.13"/>
</dbReference>
<dbReference type="Ensembl" id="ENST00000538265.5">
    <molecule id="P43268-2"/>
    <property type="protein sequence ID" value="ENSP00000443846.1"/>
    <property type="gene ID" value="ENSG00000175832.13"/>
</dbReference>
<dbReference type="Ensembl" id="ENST00000545954.5">
    <molecule id="P43268-2"/>
    <property type="protein sequence ID" value="ENSP00000440023.1"/>
    <property type="gene ID" value="ENSG00000175832.13"/>
</dbReference>
<dbReference type="Ensembl" id="ENST00000586826.1">
    <molecule id="P43268-3"/>
    <property type="protein sequence ID" value="ENSP00000468636.1"/>
    <property type="gene ID" value="ENSG00000175832.13"/>
</dbReference>
<dbReference type="Ensembl" id="ENST00000591713.5">
    <molecule id="P43268-1"/>
    <property type="protein sequence ID" value="ENSP00000465718.1"/>
    <property type="gene ID" value="ENSG00000175832.13"/>
</dbReference>
<dbReference type="GeneID" id="2118"/>
<dbReference type="KEGG" id="hsa:2118"/>
<dbReference type="MANE-Select" id="ENST00000319349.10">
    <property type="protein sequence ID" value="ENSP00000321835.4"/>
    <property type="RefSeq nucleotide sequence ID" value="NM_001079675.5"/>
    <property type="RefSeq protein sequence ID" value="NP_001073143.1"/>
</dbReference>
<dbReference type="UCSC" id="uc002idv.5">
    <molecule id="P43268-1"/>
    <property type="organism name" value="human"/>
</dbReference>
<dbReference type="AGR" id="HGNC:3493"/>
<dbReference type="CTD" id="2118"/>
<dbReference type="DisGeNET" id="2118"/>
<dbReference type="GeneCards" id="ETV4"/>
<dbReference type="HGNC" id="HGNC:3493">
    <property type="gene designation" value="ETV4"/>
</dbReference>
<dbReference type="HPA" id="ENSG00000175832">
    <property type="expression patterns" value="Low tissue specificity"/>
</dbReference>
<dbReference type="MalaCards" id="ETV4"/>
<dbReference type="MIM" id="600711">
    <property type="type" value="gene"/>
</dbReference>
<dbReference type="neXtProt" id="NX_P43268"/>
<dbReference type="OpenTargets" id="ENSG00000175832"/>
<dbReference type="Orphanet" id="319">
    <property type="disease" value="Skeletal Ewing sarcoma"/>
</dbReference>
<dbReference type="PharmGKB" id="PA27907"/>
<dbReference type="VEuPathDB" id="HostDB:ENSG00000175832"/>
<dbReference type="eggNOG" id="KOG3806">
    <property type="taxonomic scope" value="Eukaryota"/>
</dbReference>
<dbReference type="GeneTree" id="ENSGT00940000158142"/>
<dbReference type="HOGENOM" id="CLU_030025_1_0_1"/>
<dbReference type="InParanoid" id="P43268"/>
<dbReference type="OMA" id="DPCVPYL"/>
<dbReference type="OrthoDB" id="10067219at2759"/>
<dbReference type="PAN-GO" id="P43268">
    <property type="GO annotations" value="4 GO annotations based on evolutionary models"/>
</dbReference>
<dbReference type="PhylomeDB" id="P43268"/>
<dbReference type="TreeFam" id="TF316214"/>
<dbReference type="PathwayCommons" id="P43268"/>
<dbReference type="Reactome" id="R-HSA-5687128">
    <property type="pathway name" value="MAPK6/MAPK4 signaling"/>
</dbReference>
<dbReference type="SignaLink" id="P43268"/>
<dbReference type="SIGNOR" id="P43268"/>
<dbReference type="BioGRID-ORCS" id="2118">
    <property type="hits" value="17 hits in 1193 CRISPR screens"/>
</dbReference>
<dbReference type="ChiTaRS" id="ETV4">
    <property type="organism name" value="human"/>
</dbReference>
<dbReference type="EvolutionaryTrace" id="P43268"/>
<dbReference type="GeneWiki" id="ETV4"/>
<dbReference type="GenomeRNAi" id="2118"/>
<dbReference type="Pharos" id="P43268">
    <property type="development level" value="Tbio"/>
</dbReference>
<dbReference type="PRO" id="PR:P43268"/>
<dbReference type="Proteomes" id="UP000005640">
    <property type="component" value="Chromosome 17"/>
</dbReference>
<dbReference type="RNAct" id="P43268">
    <property type="molecule type" value="protein"/>
</dbReference>
<dbReference type="Bgee" id="ENSG00000175832">
    <property type="expression patterns" value="Expressed in primordial germ cell in gonad and 134 other cell types or tissues"/>
</dbReference>
<dbReference type="ExpressionAtlas" id="P43268">
    <property type="expression patterns" value="baseline and differential"/>
</dbReference>
<dbReference type="GO" id="GO:0000785">
    <property type="term" value="C:chromatin"/>
    <property type="evidence" value="ECO:0000247"/>
    <property type="project" value="NTNU_SB"/>
</dbReference>
<dbReference type="GO" id="GO:0005694">
    <property type="term" value="C:chromosome"/>
    <property type="evidence" value="ECO:0000314"/>
    <property type="project" value="HPA"/>
</dbReference>
<dbReference type="GO" id="GO:0005730">
    <property type="term" value="C:nucleolus"/>
    <property type="evidence" value="ECO:0000314"/>
    <property type="project" value="HPA"/>
</dbReference>
<dbReference type="GO" id="GO:0005654">
    <property type="term" value="C:nucleoplasm"/>
    <property type="evidence" value="ECO:0000304"/>
    <property type="project" value="Reactome"/>
</dbReference>
<dbReference type="GO" id="GO:0005634">
    <property type="term" value="C:nucleus"/>
    <property type="evidence" value="ECO:0000318"/>
    <property type="project" value="GO_Central"/>
</dbReference>
<dbReference type="GO" id="GO:0001228">
    <property type="term" value="F:DNA-binding transcription activator activity, RNA polymerase II-specific"/>
    <property type="evidence" value="ECO:0000314"/>
    <property type="project" value="NTNU_SB"/>
</dbReference>
<dbReference type="GO" id="GO:0000981">
    <property type="term" value="F:DNA-binding transcription factor activity, RNA polymerase II-specific"/>
    <property type="evidence" value="ECO:0000247"/>
    <property type="project" value="NTNU_SB"/>
</dbReference>
<dbReference type="GO" id="GO:0000978">
    <property type="term" value="F:RNA polymerase II cis-regulatory region sequence-specific DNA binding"/>
    <property type="evidence" value="ECO:0000314"/>
    <property type="project" value="NTNU_SB"/>
</dbReference>
<dbReference type="GO" id="GO:1990837">
    <property type="term" value="F:sequence-specific double-stranded DNA binding"/>
    <property type="evidence" value="ECO:0000314"/>
    <property type="project" value="ARUK-UCL"/>
</dbReference>
<dbReference type="GO" id="GO:0030154">
    <property type="term" value="P:cell differentiation"/>
    <property type="evidence" value="ECO:0000318"/>
    <property type="project" value="GO_Central"/>
</dbReference>
<dbReference type="GO" id="GO:0045618">
    <property type="term" value="P:positive regulation of keratinocyte differentiation"/>
    <property type="evidence" value="ECO:0000315"/>
    <property type="project" value="UniProtKB"/>
</dbReference>
<dbReference type="GO" id="GO:0045944">
    <property type="term" value="P:positive regulation of transcription by RNA polymerase II"/>
    <property type="evidence" value="ECO:0000314"/>
    <property type="project" value="NTNU_SB"/>
</dbReference>
<dbReference type="GO" id="GO:0006357">
    <property type="term" value="P:regulation of transcription by RNA polymerase II"/>
    <property type="evidence" value="ECO:0000318"/>
    <property type="project" value="GO_Central"/>
</dbReference>
<dbReference type="FunFam" id="1.10.10.10:FF:000121">
    <property type="entry name" value="ETS translocation variant 5"/>
    <property type="match status" value="1"/>
</dbReference>
<dbReference type="Gene3D" id="1.10.10.10">
    <property type="entry name" value="Winged helix-like DNA-binding domain superfamily/Winged helix DNA-binding domain"/>
    <property type="match status" value="1"/>
</dbReference>
<dbReference type="InterPro" id="IPR000418">
    <property type="entry name" value="Ets_dom"/>
</dbReference>
<dbReference type="InterPro" id="IPR046328">
    <property type="entry name" value="ETS_fam"/>
</dbReference>
<dbReference type="InterPro" id="IPR006715">
    <property type="entry name" value="ETS_PEA3_N"/>
</dbReference>
<dbReference type="InterPro" id="IPR036388">
    <property type="entry name" value="WH-like_DNA-bd_sf"/>
</dbReference>
<dbReference type="InterPro" id="IPR036390">
    <property type="entry name" value="WH_DNA-bd_sf"/>
</dbReference>
<dbReference type="PANTHER" id="PTHR11849">
    <property type="entry name" value="ETS"/>
    <property type="match status" value="1"/>
</dbReference>
<dbReference type="PANTHER" id="PTHR11849:SF181">
    <property type="entry name" value="ETS TRANSLOCATION VARIANT 4"/>
    <property type="match status" value="1"/>
</dbReference>
<dbReference type="Pfam" id="PF00178">
    <property type="entry name" value="Ets"/>
    <property type="match status" value="1"/>
</dbReference>
<dbReference type="Pfam" id="PF04621">
    <property type="entry name" value="ETS_PEA3_N"/>
    <property type="match status" value="1"/>
</dbReference>
<dbReference type="PRINTS" id="PR00454">
    <property type="entry name" value="ETSDOMAIN"/>
</dbReference>
<dbReference type="SMART" id="SM00413">
    <property type="entry name" value="ETS"/>
    <property type="match status" value="1"/>
</dbReference>
<dbReference type="SUPFAM" id="SSF46785">
    <property type="entry name" value="Winged helix' DNA-binding domain"/>
    <property type="match status" value="1"/>
</dbReference>
<dbReference type="PROSITE" id="PS00345">
    <property type="entry name" value="ETS_DOMAIN_1"/>
    <property type="match status" value="1"/>
</dbReference>
<dbReference type="PROSITE" id="PS00346">
    <property type="entry name" value="ETS_DOMAIN_2"/>
    <property type="match status" value="1"/>
</dbReference>
<dbReference type="PROSITE" id="PS50061">
    <property type="entry name" value="ETS_DOMAIN_3"/>
    <property type="match status" value="1"/>
</dbReference>
<feature type="chain" id="PRO_0000204116" description="ETS translocation variant 4">
    <location>
        <begin position="1"/>
        <end position="484"/>
    </location>
</feature>
<feature type="DNA-binding region" description="ETS" evidence="2">
    <location>
        <begin position="341"/>
        <end position="421"/>
    </location>
</feature>
<feature type="region of interest" description="Disordered" evidence="3">
    <location>
        <begin position="90"/>
        <end position="115"/>
    </location>
</feature>
<feature type="modified residue" description="Phosphoserine" evidence="5">
    <location>
        <position position="101"/>
    </location>
</feature>
<feature type="modified residue" description="Phosphoserine" evidence="11">
    <location>
        <position position="140"/>
    </location>
</feature>
<feature type="modified residue" description="Phosphoserine" evidence="11">
    <location>
        <position position="149"/>
    </location>
</feature>
<feature type="modified residue" description="Phosphoserine" evidence="1">
    <location>
        <position position="214"/>
    </location>
</feature>
<feature type="cross-link" description="Glycyl lysine isopeptide (Lys-Gly) (interchain with G-Cter in SUMO2)" evidence="13">
    <location>
        <position position="6"/>
    </location>
</feature>
<feature type="cross-link" description="Glycyl lysine isopeptide (Lys-Gly) (interchain with G-Cter in SUMO)">
    <location>
        <position position="96"/>
    </location>
</feature>
<feature type="cross-link" description="Glycyl lysine isopeptide (Lys-Gly) (interchain with G-Cter in SUMO2)" evidence="13">
    <location>
        <position position="139"/>
    </location>
</feature>
<feature type="cross-link" description="Glycyl lysine isopeptide (Lys-Gly) (interchain with G-Cter in SUMO)">
    <location>
        <position position="226"/>
    </location>
</feature>
<feature type="cross-link" description="Glycyl lysine isopeptide (Lys-Gly) (interchain with G-Cter in SUMO)">
    <location>
        <position position="260"/>
    </location>
</feature>
<feature type="cross-link" description="Glycyl lysine isopeptide (Lys-Gly) (interchain with G-Cter in SUMO2)" evidence="12">
    <location>
        <position position="322"/>
    </location>
</feature>
<feature type="splice variant" id="VSP_055314" description="In isoform 3." evidence="9">
    <location>
        <begin position="1"/>
        <end position="277"/>
    </location>
</feature>
<feature type="splice variant" id="VSP_046036" description="In isoform 2." evidence="8">
    <location>
        <begin position="1"/>
        <end position="39"/>
    </location>
</feature>
<feature type="sequence variant" id="VAR_069110" description="In dbSNP:rs150119757." evidence="4">
    <original>F</original>
    <variation>I</variation>
    <location>
        <position position="195"/>
    </location>
</feature>
<feature type="sequence variant" id="VAR_048950" description="In dbSNP:rs34260468.">
    <original>R</original>
    <variation>C</variation>
    <location>
        <position position="437"/>
    </location>
</feature>
<feature type="mutagenesis site" description="Altered sumoylation pattern. Loss of sumoylation, ubiquitination and transcriptional activator function; when associated with R-226 and R-260." evidence="5">
    <original>K</original>
    <variation>R</variation>
    <location>
        <position position="96"/>
    </location>
</feature>
<feature type="mutagenesis site" description="Loss of polysumoylation and ubiquitination; when associated with A-228; A-262; A-324 and A-443." evidence="5">
    <original>E</original>
    <variation>A</variation>
    <location>
        <position position="98"/>
    </location>
</feature>
<feature type="mutagenesis site" description="Loss of sumoylation at K-96." evidence="5">
    <original>S</original>
    <variation>A</variation>
    <location>
        <position position="101"/>
    </location>
</feature>
<feature type="mutagenesis site" description="Normal sumoylation at K-96." evidence="5">
    <original>S</original>
    <variation>E</variation>
    <location>
        <position position="101"/>
    </location>
</feature>
<feature type="mutagenesis site" description="Loss of sumoylation at K-96." evidence="5">
    <original>P</original>
    <variation>A</variation>
    <location>
        <position position="102"/>
    </location>
</feature>
<feature type="mutagenesis site" description="Altered sumoylation pattern. Loss of sumoylation, ubiquitination and transcriptional activator function; when associated with R-96 and R-260." evidence="5">
    <original>K</original>
    <variation>R</variation>
    <location>
        <position position="226"/>
    </location>
</feature>
<feature type="mutagenesis site" description="Loss of polysumoylation and ubiquitination; when associated with A-98; A-262; A-324 and A-443." evidence="5">
    <original>E</original>
    <variation>A</variation>
    <location>
        <position position="228"/>
    </location>
</feature>
<feature type="mutagenesis site" description="Altered sumoylation pattern. Loss of sumoylation, ubiquitination and transcriptional activator function; when associated with R-96 and R-226." evidence="5">
    <original>K</original>
    <variation>R</variation>
    <location>
        <position position="260"/>
    </location>
</feature>
<feature type="mutagenesis site" description="Loss of polysumoylation and ubiquitination; when associated with A-98; A-228; A-324 and A-443." evidence="5">
    <original>E</original>
    <variation>A</variation>
    <location>
        <position position="262"/>
    </location>
</feature>
<feature type="mutagenesis site" description="Loss of polysumoylation and ubiquitination; when associated with A-98; A-228; A-262 and A-443." evidence="5">
    <original>E</original>
    <variation>A</variation>
    <location>
        <position position="324"/>
    </location>
</feature>
<feature type="mutagenesis site" description="Loss of polysumoylation and ubiquitination; when associated with A-98; A-228; A-262 and A-324." evidence="5">
    <original>E</original>
    <variation>A</variation>
    <location>
        <position position="443"/>
    </location>
</feature>
<feature type="sequence conflict" description="In Ref. 6; BAA02234." evidence="10" ref="6">
    <original>GNGS</original>
    <variation>EMSD</variation>
    <location>
        <begin position="24"/>
        <end position="27"/>
    </location>
</feature>
<feature type="helix" evidence="14">
    <location>
        <begin position="343"/>
        <end position="352"/>
    </location>
</feature>
<feature type="helix" evidence="14">
    <location>
        <begin position="354"/>
        <end position="356"/>
    </location>
</feature>
<feature type="turn" evidence="14">
    <location>
        <begin position="357"/>
        <end position="359"/>
    </location>
</feature>
<feature type="strand" evidence="14">
    <location>
        <begin position="360"/>
        <end position="362"/>
    </location>
</feature>
<feature type="strand" evidence="14">
    <location>
        <begin position="368"/>
        <end position="373"/>
    </location>
</feature>
<feature type="helix" evidence="14">
    <location>
        <begin position="374"/>
        <end position="385"/>
    </location>
</feature>
<feature type="helix" evidence="14">
    <location>
        <begin position="392"/>
        <end position="404"/>
    </location>
</feature>
<feature type="strand" evidence="14">
    <location>
        <begin position="407"/>
        <end position="410"/>
    </location>
</feature>
<feature type="strand" evidence="14">
    <location>
        <begin position="415"/>
        <end position="420"/>
    </location>
</feature>
<feature type="helix" evidence="14">
    <location>
        <begin position="424"/>
        <end position="431"/>
    </location>
</feature>
<gene>
    <name type="primary">ETV4</name>
    <name type="synonym">E1AF</name>
    <name type="synonym">PEA3</name>
</gene>
<accession>P43268</accession>
<accession>A8K314</accession>
<accession>B7Z5J3</accession>
<accession>B7Z9J6</accession>
<accession>Q96AW9</accession>
<keyword id="KW-0002">3D-structure</keyword>
<keyword id="KW-0010">Activator</keyword>
<keyword id="KW-0025">Alternative splicing</keyword>
<keyword id="KW-0238">DNA-binding</keyword>
<keyword id="KW-1017">Isopeptide bond</keyword>
<keyword id="KW-0539">Nucleus</keyword>
<keyword id="KW-0597">Phosphoprotein</keyword>
<keyword id="KW-1267">Proteomics identification</keyword>
<keyword id="KW-1185">Reference proteome</keyword>
<keyword id="KW-0804">Transcription</keyword>
<keyword id="KW-0805">Transcription regulation</keyword>
<keyword id="KW-0832">Ubl conjugation</keyword>